<accession>Q6T724</accession>
<proteinExistence type="inferred from homology"/>
<dbReference type="EMBL" id="AY429652">
    <property type="protein sequence ID" value="AAR10381.1"/>
    <property type="molecule type" value="Genomic_DNA"/>
</dbReference>
<dbReference type="SMR" id="Q6T724"/>
<dbReference type="GO" id="GO:0005737">
    <property type="term" value="C:cytoplasm"/>
    <property type="evidence" value="ECO:0007669"/>
    <property type="project" value="UniProtKB-SubCell"/>
</dbReference>
<dbReference type="GO" id="GO:0016607">
    <property type="term" value="C:nuclear speck"/>
    <property type="evidence" value="ECO:0007669"/>
    <property type="project" value="UniProtKB-SubCell"/>
</dbReference>
<dbReference type="GO" id="GO:0005634">
    <property type="term" value="C:nucleus"/>
    <property type="evidence" value="ECO:0000250"/>
    <property type="project" value="UniProtKB"/>
</dbReference>
<dbReference type="GO" id="GO:0005516">
    <property type="term" value="F:calmodulin binding"/>
    <property type="evidence" value="ECO:0007669"/>
    <property type="project" value="UniProtKB-KW"/>
</dbReference>
<dbReference type="GO" id="GO:0001228">
    <property type="term" value="F:DNA-binding transcription activator activity, RNA polymerase II-specific"/>
    <property type="evidence" value="ECO:0007669"/>
    <property type="project" value="TreeGrafter"/>
</dbReference>
<dbReference type="GO" id="GO:0000978">
    <property type="term" value="F:RNA polymerase II cis-regulatory region sequence-specific DNA binding"/>
    <property type="evidence" value="ECO:0007669"/>
    <property type="project" value="TreeGrafter"/>
</dbReference>
<dbReference type="GO" id="GO:0030154">
    <property type="term" value="P:cell differentiation"/>
    <property type="evidence" value="ECO:0007669"/>
    <property type="project" value="UniProtKB-KW"/>
</dbReference>
<dbReference type="GO" id="GO:0030238">
    <property type="term" value="P:male sex determination"/>
    <property type="evidence" value="ECO:0007669"/>
    <property type="project" value="InterPro"/>
</dbReference>
<dbReference type="GO" id="GO:0007548">
    <property type="term" value="P:sex differentiation"/>
    <property type="evidence" value="ECO:0007669"/>
    <property type="project" value="UniProtKB-KW"/>
</dbReference>
<dbReference type="CDD" id="cd22034">
    <property type="entry name" value="HMG-box_SoxA_SRY"/>
    <property type="match status" value="1"/>
</dbReference>
<dbReference type="FunFam" id="1.10.30.10:FF:000002">
    <property type="entry name" value="transcription factor Sox-2"/>
    <property type="match status" value="1"/>
</dbReference>
<dbReference type="Gene3D" id="1.10.30.10">
    <property type="entry name" value="High mobility group box domain"/>
    <property type="match status" value="1"/>
</dbReference>
<dbReference type="InterPro" id="IPR009071">
    <property type="entry name" value="HMG_box_dom"/>
</dbReference>
<dbReference type="InterPro" id="IPR036910">
    <property type="entry name" value="HMG_box_dom_sf"/>
</dbReference>
<dbReference type="InterPro" id="IPR017253">
    <property type="entry name" value="SRY"/>
</dbReference>
<dbReference type="InterPro" id="IPR050140">
    <property type="entry name" value="SRY-related_HMG-box_TF-like"/>
</dbReference>
<dbReference type="PANTHER" id="PTHR10270:SF161">
    <property type="entry name" value="SEX-DETERMINING REGION Y PROTEIN"/>
    <property type="match status" value="1"/>
</dbReference>
<dbReference type="PANTHER" id="PTHR10270">
    <property type="entry name" value="SOX TRANSCRIPTION FACTOR"/>
    <property type="match status" value="1"/>
</dbReference>
<dbReference type="Pfam" id="PF00505">
    <property type="entry name" value="HMG_box"/>
    <property type="match status" value="1"/>
</dbReference>
<dbReference type="PIRSF" id="PIRSF037653">
    <property type="entry name" value="SRY"/>
    <property type="match status" value="1"/>
</dbReference>
<dbReference type="SMART" id="SM00398">
    <property type="entry name" value="HMG"/>
    <property type="match status" value="1"/>
</dbReference>
<dbReference type="SUPFAM" id="SSF47095">
    <property type="entry name" value="HMG-box"/>
    <property type="match status" value="1"/>
</dbReference>
<dbReference type="PROSITE" id="PS50118">
    <property type="entry name" value="HMG_BOX_2"/>
    <property type="match status" value="1"/>
</dbReference>
<gene>
    <name type="primary">SRY</name>
    <name type="synonym">TDF</name>
</gene>
<reference key="1">
    <citation type="submission" date="2003-09" db="EMBL/GenBank/DDBJ databases">
        <title>A phylogeny of the pinnipeds from mitochondrial and single copy nuclear gene sequences.</title>
        <authorList>
            <person name="Kinnear M.W."/>
            <person name="Walker G."/>
            <person name="Amos W."/>
        </authorList>
    </citation>
    <scope>NUCLEOTIDE SEQUENCE [GENOMIC DNA]</scope>
</reference>
<protein>
    <recommendedName>
        <fullName>Sex-determining region Y protein</fullName>
    </recommendedName>
    <alternativeName>
        <fullName>Testis-determining factor</fullName>
    </alternativeName>
</protein>
<organism>
    <name type="scientific">Arctocephalus forsteri</name>
    <name type="common">New Zealand fur seal</name>
    <name type="synonym">Arctocephalus australis forsteri</name>
    <dbReference type="NCBI Taxonomy" id="29084"/>
    <lineage>
        <taxon>Eukaryota</taxon>
        <taxon>Metazoa</taxon>
        <taxon>Chordata</taxon>
        <taxon>Craniata</taxon>
        <taxon>Vertebrata</taxon>
        <taxon>Euteleostomi</taxon>
        <taxon>Mammalia</taxon>
        <taxon>Eutheria</taxon>
        <taxon>Laurasiatheria</taxon>
        <taxon>Carnivora</taxon>
        <taxon>Caniformia</taxon>
        <taxon>Pinnipedia</taxon>
        <taxon>Otariidae</taxon>
        <taxon>Arctocephalus</taxon>
    </lineage>
</organism>
<evidence type="ECO:0000250" key="1">
    <source>
        <dbReference type="UniProtKB" id="P36394"/>
    </source>
</evidence>
<evidence type="ECO:0000250" key="2">
    <source>
        <dbReference type="UniProtKB" id="Q05066"/>
    </source>
</evidence>
<evidence type="ECO:0000255" key="3">
    <source>
        <dbReference type="PROSITE-ProRule" id="PRU00267"/>
    </source>
</evidence>
<evidence type="ECO:0000256" key="4">
    <source>
        <dbReference type="SAM" id="MobiDB-lite"/>
    </source>
</evidence>
<evidence type="ECO:0000305" key="5"/>
<keyword id="KW-0010">Activator</keyword>
<keyword id="KW-0112">Calmodulin-binding</keyword>
<keyword id="KW-0963">Cytoplasm</keyword>
<keyword id="KW-0221">Differentiation</keyword>
<keyword id="KW-0238">DNA-binding</keyword>
<keyword id="KW-0539">Nucleus</keyword>
<keyword id="KW-0726">Sexual differentiation</keyword>
<keyword id="KW-0804">Transcription</keyword>
<keyword id="KW-0805">Transcription regulation</keyword>
<feature type="chain" id="PRO_0000048635" description="Sex-determining region Y protein">
    <location>
        <begin position="1"/>
        <end position="220"/>
    </location>
</feature>
<feature type="DNA-binding region" description="HMG box" evidence="3">
    <location>
        <begin position="54"/>
        <end position="122"/>
    </location>
</feature>
<feature type="region of interest" description="Disordered" evidence="4">
    <location>
        <begin position="193"/>
        <end position="220"/>
    </location>
</feature>
<name>SRY_ARCFO</name>
<sequence length="220" mass="25639">MFGVLNSDDHRAAIQQRNILAFGRTSSELWTSNPTSNYWCETRGNGRDSGQNRVRRPMNAFMVWSRDQRRKVALENPQMQNSEISKQLGYQWKMLTEAEKWPFFEEAQRLQAVHREKYPDYKYRPRRKALPQKSDKLLPAASSSLLCRQVLVDKWYPFTYRDSCSRATHSHMEDQLSSSQPVNIANSLLQQEHHYSSTSLRGSPETLATHLSADPPFYPK</sequence>
<comment type="function">
    <text evidence="1 2">Transcriptional regulator that controls a genetic switch in male development. It is necessary and sufficient for initiating male sex determination by directing the development of supporting cell precursors (pre-Sertoli cells) as Sertoli rather than granulosa cells. Involved in different aspects of gene regulation including promoter activation or repression. Binds to the DNA consensus sequence 5'-[AT]AACAA[AT]-3'. SRY HMG box recognizes DNA by partial intercalation in the minor groove and promotes DNA bending. Also involved in pre-mRNA splicing (By similarity). In male adult brain involved in the maintenance of motor functions of dopaminergic neurons (By similarity).</text>
</comment>
<comment type="subunit">
    <text evidence="2">Interacts with CALM, EP300, HDAC3, KPNB1, ZNF208 isoform KRAB-O, PARP1, SLC9A3R2 and WT1. The interaction with EP300 modulates its DNA-binding activity. The interaction with KPNB1 is sensitive to dissociation by Ran in the GTP-bound form. Interaction with PARP1 impaired its DNA-binding activity.</text>
</comment>
<comment type="subcellular location">
    <subcellularLocation>
        <location evidence="2">Nucleus speckle</location>
    </subcellularLocation>
    <subcellularLocation>
        <location evidence="2">Cytoplasm</location>
    </subcellularLocation>
    <subcellularLocation>
        <location evidence="2">Nucleus</location>
    </subcellularLocation>
</comment>
<comment type="similarity">
    <text evidence="5">Belongs to the SRY family.</text>
</comment>
<comment type="online information" name="Protein Spotlight">
    <link uri="https://www.proteinspotlight.org/back_issues/080"/>
    <text>The tenuous nature of sex - Issue 80 of March 2007</text>
</comment>